<evidence type="ECO:0000255" key="1">
    <source>
        <dbReference type="HAMAP-Rule" id="MF_00154"/>
    </source>
</evidence>
<evidence type="ECO:0000305" key="2"/>
<name>CYOE_COLP3</name>
<accession>Q48AB7</accession>
<reference key="1">
    <citation type="journal article" date="2005" name="Proc. Natl. Acad. Sci. U.S.A.">
        <title>The psychrophilic lifestyle as revealed by the genome sequence of Colwellia psychrerythraea 34H through genomic and proteomic analyses.</title>
        <authorList>
            <person name="Methe B.A."/>
            <person name="Nelson K.E."/>
            <person name="Deming J.W."/>
            <person name="Momen B."/>
            <person name="Melamud E."/>
            <person name="Zhang X."/>
            <person name="Moult J."/>
            <person name="Madupu R."/>
            <person name="Nelson W.C."/>
            <person name="Dodson R.J."/>
            <person name="Brinkac L.M."/>
            <person name="Daugherty S.C."/>
            <person name="Durkin A.S."/>
            <person name="DeBoy R.T."/>
            <person name="Kolonay J.F."/>
            <person name="Sullivan S.A."/>
            <person name="Zhou L."/>
            <person name="Davidsen T.M."/>
            <person name="Wu M."/>
            <person name="Huston A.L."/>
            <person name="Lewis M."/>
            <person name="Weaver B."/>
            <person name="Weidman J.F."/>
            <person name="Khouri H."/>
            <person name="Utterback T.R."/>
            <person name="Feldblyum T.V."/>
            <person name="Fraser C.M."/>
        </authorList>
    </citation>
    <scope>NUCLEOTIDE SEQUENCE [LARGE SCALE GENOMIC DNA]</scope>
    <source>
        <strain>34H / ATCC BAA-681</strain>
    </source>
</reference>
<keyword id="KW-0997">Cell inner membrane</keyword>
<keyword id="KW-1003">Cell membrane</keyword>
<keyword id="KW-0350">Heme biosynthesis</keyword>
<keyword id="KW-0472">Membrane</keyword>
<keyword id="KW-0808">Transferase</keyword>
<keyword id="KW-0812">Transmembrane</keyword>
<keyword id="KW-1133">Transmembrane helix</keyword>
<comment type="function">
    <text evidence="1">Converts heme B (protoheme IX) to heme O by substitution of the vinyl group on carbon 2 of heme B porphyrin ring with a hydroxyethyl farnesyl side group.</text>
</comment>
<comment type="catalytic activity">
    <reaction evidence="1">
        <text>heme b + (2E,6E)-farnesyl diphosphate + H2O = Fe(II)-heme o + diphosphate</text>
        <dbReference type="Rhea" id="RHEA:28070"/>
        <dbReference type="ChEBI" id="CHEBI:15377"/>
        <dbReference type="ChEBI" id="CHEBI:33019"/>
        <dbReference type="ChEBI" id="CHEBI:60344"/>
        <dbReference type="ChEBI" id="CHEBI:60530"/>
        <dbReference type="ChEBI" id="CHEBI:175763"/>
        <dbReference type="EC" id="2.5.1.141"/>
    </reaction>
</comment>
<comment type="pathway">
    <text evidence="1">Porphyrin-containing compound metabolism; heme O biosynthesis; heme O from protoheme: step 1/1.</text>
</comment>
<comment type="subcellular location">
    <subcellularLocation>
        <location evidence="1">Cell inner membrane</location>
        <topology evidence="1">Multi-pass membrane protein</topology>
    </subcellularLocation>
</comment>
<comment type="miscellaneous">
    <text evidence="1">Carbon 2 of the heme B porphyrin ring is defined according to the Fischer nomenclature.</text>
</comment>
<comment type="similarity">
    <text evidence="1">Belongs to the UbiA prenyltransferase family. Protoheme IX farnesyltransferase subfamily.</text>
</comment>
<comment type="sequence caution" evidence="2">
    <conflict type="erroneous initiation">
        <sequence resource="EMBL-CDS" id="AAZ24423"/>
    </conflict>
</comment>
<gene>
    <name evidence="1" type="primary">cyoE</name>
    <name type="ordered locus">CPS_0229</name>
</gene>
<dbReference type="EC" id="2.5.1.141" evidence="1"/>
<dbReference type="EMBL" id="CP000083">
    <property type="protein sequence ID" value="AAZ24423.1"/>
    <property type="status" value="ALT_INIT"/>
    <property type="molecule type" value="Genomic_DNA"/>
</dbReference>
<dbReference type="RefSeq" id="WP_049757975.1">
    <property type="nucleotide sequence ID" value="NC_003910.7"/>
</dbReference>
<dbReference type="SMR" id="Q48AB7"/>
<dbReference type="STRING" id="167879.CPS_0229"/>
<dbReference type="KEGG" id="cps:CPS_0229"/>
<dbReference type="eggNOG" id="COG0109">
    <property type="taxonomic scope" value="Bacteria"/>
</dbReference>
<dbReference type="HOGENOM" id="CLU_029631_0_2_6"/>
<dbReference type="UniPathway" id="UPA00834">
    <property type="reaction ID" value="UER00712"/>
</dbReference>
<dbReference type="Proteomes" id="UP000000547">
    <property type="component" value="Chromosome"/>
</dbReference>
<dbReference type="GO" id="GO:0005886">
    <property type="term" value="C:plasma membrane"/>
    <property type="evidence" value="ECO:0007669"/>
    <property type="project" value="UniProtKB-SubCell"/>
</dbReference>
<dbReference type="GO" id="GO:0008495">
    <property type="term" value="F:protoheme IX farnesyltransferase activity"/>
    <property type="evidence" value="ECO:0007669"/>
    <property type="project" value="UniProtKB-UniRule"/>
</dbReference>
<dbReference type="GO" id="GO:0048034">
    <property type="term" value="P:heme O biosynthetic process"/>
    <property type="evidence" value="ECO:0007669"/>
    <property type="project" value="UniProtKB-UniRule"/>
</dbReference>
<dbReference type="CDD" id="cd13957">
    <property type="entry name" value="PT_UbiA_Cox10"/>
    <property type="match status" value="1"/>
</dbReference>
<dbReference type="Gene3D" id="1.10.357.140">
    <property type="entry name" value="UbiA prenyltransferase"/>
    <property type="match status" value="1"/>
</dbReference>
<dbReference type="HAMAP" id="MF_00154">
    <property type="entry name" value="CyoE_CtaB"/>
    <property type="match status" value="1"/>
</dbReference>
<dbReference type="InterPro" id="IPR006369">
    <property type="entry name" value="Protohaem_IX_farnesylTrfase"/>
</dbReference>
<dbReference type="InterPro" id="IPR000537">
    <property type="entry name" value="UbiA_prenyltransferase"/>
</dbReference>
<dbReference type="InterPro" id="IPR030470">
    <property type="entry name" value="UbiA_prenylTrfase_CS"/>
</dbReference>
<dbReference type="InterPro" id="IPR044878">
    <property type="entry name" value="UbiA_sf"/>
</dbReference>
<dbReference type="NCBIfam" id="TIGR01473">
    <property type="entry name" value="cyoE_ctaB"/>
    <property type="match status" value="1"/>
</dbReference>
<dbReference type="NCBIfam" id="NF003349">
    <property type="entry name" value="PRK04375.1-2"/>
    <property type="match status" value="1"/>
</dbReference>
<dbReference type="PANTHER" id="PTHR43448:SF7">
    <property type="entry name" value="4-HYDROXYBENZOATE SOLANESYLTRANSFERASE"/>
    <property type="match status" value="1"/>
</dbReference>
<dbReference type="PANTHER" id="PTHR43448">
    <property type="entry name" value="PROTOHEME IX FARNESYLTRANSFERASE, MITOCHONDRIAL"/>
    <property type="match status" value="1"/>
</dbReference>
<dbReference type="Pfam" id="PF01040">
    <property type="entry name" value="UbiA"/>
    <property type="match status" value="1"/>
</dbReference>
<dbReference type="PROSITE" id="PS00943">
    <property type="entry name" value="UBIA"/>
    <property type="match status" value="1"/>
</dbReference>
<feature type="chain" id="PRO_0000326888" description="Protoheme IX farnesyltransferase">
    <location>
        <begin position="1"/>
        <end position="306"/>
    </location>
</feature>
<feature type="transmembrane region" description="Helical" evidence="1">
    <location>
        <begin position="32"/>
        <end position="52"/>
    </location>
</feature>
<feature type="transmembrane region" description="Helical" evidence="1">
    <location>
        <begin position="58"/>
        <end position="78"/>
    </location>
</feature>
<feature type="transmembrane region" description="Helical" evidence="1">
    <location>
        <begin position="103"/>
        <end position="123"/>
    </location>
</feature>
<feature type="transmembrane region" description="Helical" evidence="1">
    <location>
        <begin position="126"/>
        <end position="146"/>
    </location>
</feature>
<feature type="transmembrane region" description="Helical" evidence="1">
    <location>
        <begin position="153"/>
        <end position="173"/>
    </location>
</feature>
<feature type="transmembrane region" description="Helical" evidence="1">
    <location>
        <begin position="180"/>
        <end position="200"/>
    </location>
</feature>
<feature type="transmembrane region" description="Helical" evidence="1">
    <location>
        <begin position="227"/>
        <end position="247"/>
    </location>
</feature>
<feature type="transmembrane region" description="Helical" evidence="1">
    <location>
        <begin position="249"/>
        <end position="269"/>
    </location>
</feature>
<feature type="transmembrane region" description="Helical" evidence="1">
    <location>
        <begin position="278"/>
        <end position="298"/>
    </location>
</feature>
<protein>
    <recommendedName>
        <fullName evidence="1">Protoheme IX farnesyltransferase</fullName>
        <ecNumber evidence="1">2.5.1.141</ecNumber>
    </recommendedName>
    <alternativeName>
        <fullName evidence="1">Heme B farnesyltransferase</fullName>
    </alternativeName>
    <alternativeName>
        <fullName evidence="1">Heme O synthase</fullName>
    </alternativeName>
</protein>
<sequence length="306" mass="33720">MPSVINTGHHHFSISNIFANWRAYYDITKPKVVALLVLTALVGMSLSVPGALPWQRLIPAMLGIGLLSSAAAAINHIVDEKIDTVMGRTHNRPLPAGKISVTNAIVFATSIALLGFIILYALVNPLTAFLTLAGLVGYSFVYTMYLKRATPQNITIGGLAGAIPPLLGWTAMTNEVVPNALLLVLIIFTWTPPHFWALAIHRKNDYAKVNIPMLPVTHGVSFTKTQILLYTVLLFVVCLLPYLVGMSNWLYLIGACSLNLIFFGYAWQLKFNAKEGTAMATFKFSIIHLMLLFIILLLDHYWLPMG</sequence>
<organism>
    <name type="scientific">Colwellia psychrerythraea (strain 34H / ATCC BAA-681)</name>
    <name type="common">Vibrio psychroerythus</name>
    <dbReference type="NCBI Taxonomy" id="167879"/>
    <lineage>
        <taxon>Bacteria</taxon>
        <taxon>Pseudomonadati</taxon>
        <taxon>Pseudomonadota</taxon>
        <taxon>Gammaproteobacteria</taxon>
        <taxon>Alteromonadales</taxon>
        <taxon>Colwelliaceae</taxon>
        <taxon>Colwellia</taxon>
    </lineage>
</organism>
<proteinExistence type="inferred from homology"/>